<evidence type="ECO:0000255" key="1">
    <source>
        <dbReference type="HAMAP-Rule" id="MF_01446"/>
    </source>
</evidence>
<comment type="function">
    <text evidence="1">Required for the formation of a threonylcarbamoyl group on adenosine at position 37 (t(6)A37) in tRNAs that read codons beginning with adenine. Is probably involved in the transfer of the threonylcarbamoyl moiety of threonylcarbamoyl-AMP (TC-AMP) to the N6 group of A37.</text>
</comment>
<comment type="catalytic activity">
    <reaction evidence="1">
        <text>L-threonylcarbamoyladenylate + adenosine(37) in tRNA = N(6)-L-threonylcarbamoyladenosine(37) in tRNA + AMP + H(+)</text>
        <dbReference type="Rhea" id="RHEA:37059"/>
        <dbReference type="Rhea" id="RHEA-COMP:10162"/>
        <dbReference type="Rhea" id="RHEA-COMP:10163"/>
        <dbReference type="ChEBI" id="CHEBI:15378"/>
        <dbReference type="ChEBI" id="CHEBI:73682"/>
        <dbReference type="ChEBI" id="CHEBI:74411"/>
        <dbReference type="ChEBI" id="CHEBI:74418"/>
        <dbReference type="ChEBI" id="CHEBI:456215"/>
        <dbReference type="EC" id="2.3.1.234"/>
    </reaction>
</comment>
<comment type="cofactor">
    <cofactor evidence="1">
        <name>Fe(2+)</name>
        <dbReference type="ChEBI" id="CHEBI:29033"/>
    </cofactor>
    <text evidence="1">Binds 1 Fe(2+) ion per subunit.</text>
</comment>
<comment type="subcellular location">
    <subcellularLocation>
        <location evidence="1">Cytoplasm</location>
    </subcellularLocation>
</comment>
<comment type="similarity">
    <text evidence="1">Belongs to the KAE1 / TsaD family.</text>
</comment>
<reference key="1">
    <citation type="journal article" date="2007" name="Archaea">
        <title>The genome of Hyperthermus butylicus: a sulfur-reducing, peptide fermenting, neutrophilic Crenarchaeote growing up to 108 degrees C.</title>
        <authorList>
            <person name="Bruegger K."/>
            <person name="Chen L."/>
            <person name="Stark M."/>
            <person name="Zibat A."/>
            <person name="Redder P."/>
            <person name="Ruepp A."/>
            <person name="Awayez M."/>
            <person name="She Q."/>
            <person name="Garrett R.A."/>
            <person name="Klenk H.-P."/>
        </authorList>
    </citation>
    <scope>NUCLEOTIDE SEQUENCE [LARGE SCALE GENOMIC DNA]</scope>
    <source>
        <strain>DSM 5456 / JCM 9403 / PLM1-5</strain>
    </source>
</reference>
<gene>
    <name evidence="1" type="primary">kae1</name>
    <name type="ordered locus">Hbut_0434</name>
</gene>
<feature type="chain" id="PRO_0000303632" description="tRNA N6-adenosine threonylcarbamoyltransferase">
    <location>
        <begin position="1"/>
        <end position="363"/>
    </location>
</feature>
<feature type="binding site" evidence="1">
    <location>
        <position position="138"/>
    </location>
    <ligand>
        <name>Fe cation</name>
        <dbReference type="ChEBI" id="CHEBI:24875"/>
    </ligand>
</feature>
<feature type="binding site" evidence="1">
    <location>
        <position position="142"/>
    </location>
    <ligand>
        <name>Fe cation</name>
        <dbReference type="ChEBI" id="CHEBI:24875"/>
    </ligand>
</feature>
<feature type="binding site" evidence="1">
    <location>
        <begin position="159"/>
        <end position="163"/>
    </location>
    <ligand>
        <name>substrate</name>
    </ligand>
</feature>
<feature type="binding site" evidence="1">
    <location>
        <position position="159"/>
    </location>
    <ligand>
        <name>Fe cation</name>
        <dbReference type="ChEBI" id="CHEBI:24875"/>
    </ligand>
</feature>
<feature type="binding site" evidence="1">
    <location>
        <position position="191"/>
    </location>
    <ligand>
        <name>substrate</name>
    </ligand>
</feature>
<feature type="binding site" evidence="1">
    <location>
        <position position="212"/>
    </location>
    <ligand>
        <name>substrate</name>
    </ligand>
</feature>
<feature type="binding site" evidence="1">
    <location>
        <position position="295"/>
    </location>
    <ligand>
        <name>substrate</name>
    </ligand>
</feature>
<feature type="binding site" evidence="1">
    <location>
        <position position="323"/>
    </location>
    <ligand>
        <name>Fe cation</name>
        <dbReference type="ChEBI" id="CHEBI:24875"/>
    </ligand>
</feature>
<keyword id="KW-0012">Acyltransferase</keyword>
<keyword id="KW-0963">Cytoplasm</keyword>
<keyword id="KW-0408">Iron</keyword>
<keyword id="KW-0479">Metal-binding</keyword>
<keyword id="KW-1185">Reference proteome</keyword>
<keyword id="KW-0808">Transferase</keyword>
<keyword id="KW-0819">tRNA processing</keyword>
<proteinExistence type="inferred from homology"/>
<sequence length="363" mass="38595">MVSVDTPSSLGKPRGDPRQLYRVGGWDEEIYVLGIESTAHTFGVGIASTKPPYILVSVRDTYHPPKGGIHPREAASHHARVASEVILDALRTVGLSIRDIDAVAVALGPGLGPALRVGATIARGLAAYYGKPLVPVNHAVAHIEIARLYTGLGDPVVLYVSGGNTVVAAYAKARYRVFGETLDIALGNLLDTFARDAGIAPPYIVSGLHIVDRCAEAASKPADLPYVVKGMDVSFSGLLTAALRLWTKAGSEDEKAAVCLGLREVAYGSVVEVTERALAHTRKKSVMLTGGVAASPILRNKVRSMASYHGAVADWPPPQLAGDNGAMIAWTGLLNYLAGITVDVEESVVKQRWRLDVVEIPWR</sequence>
<protein>
    <recommendedName>
        <fullName evidence="1">tRNA N6-adenosine threonylcarbamoyltransferase</fullName>
        <ecNumber evidence="1">2.3.1.234</ecNumber>
    </recommendedName>
    <alternativeName>
        <fullName evidence="1">N6-L-threonylcarbamoyladenine synthase</fullName>
        <shortName evidence="1">t(6)A synthase</shortName>
    </alternativeName>
    <alternativeName>
        <fullName evidence="1">t(6)A37 threonylcarbamoyladenosine biosynthesis protein Kae1</fullName>
    </alternativeName>
    <alternativeName>
        <fullName evidence="1">tRNA threonylcarbamoyladenosine biosynthesis protein Kae1</fullName>
    </alternativeName>
</protein>
<name>KAE1_HYPBU</name>
<organism>
    <name type="scientific">Hyperthermus butylicus (strain DSM 5456 / JCM 9403 / PLM1-5)</name>
    <dbReference type="NCBI Taxonomy" id="415426"/>
    <lineage>
        <taxon>Archaea</taxon>
        <taxon>Thermoproteota</taxon>
        <taxon>Thermoprotei</taxon>
        <taxon>Desulfurococcales</taxon>
        <taxon>Pyrodictiaceae</taxon>
        <taxon>Hyperthermus</taxon>
    </lineage>
</organism>
<dbReference type="EC" id="2.3.1.234" evidence="1"/>
<dbReference type="EMBL" id="CP000493">
    <property type="protein sequence ID" value="ABM80300.1"/>
    <property type="molecule type" value="Genomic_DNA"/>
</dbReference>
<dbReference type="RefSeq" id="WP_011821618.1">
    <property type="nucleotide sequence ID" value="NC_008818.1"/>
</dbReference>
<dbReference type="SMR" id="A2BJY9"/>
<dbReference type="STRING" id="415426.Hbut_0434"/>
<dbReference type="EnsemblBacteria" id="ABM80300">
    <property type="protein sequence ID" value="ABM80300"/>
    <property type="gene ID" value="Hbut_0434"/>
</dbReference>
<dbReference type="GeneID" id="4781871"/>
<dbReference type="KEGG" id="hbu:Hbut_0434"/>
<dbReference type="eggNOG" id="arCOG01183">
    <property type="taxonomic scope" value="Archaea"/>
</dbReference>
<dbReference type="HOGENOM" id="CLU_023208_2_2_2"/>
<dbReference type="OrthoDB" id="6818at2157"/>
<dbReference type="Proteomes" id="UP000002593">
    <property type="component" value="Chromosome"/>
</dbReference>
<dbReference type="GO" id="GO:0005737">
    <property type="term" value="C:cytoplasm"/>
    <property type="evidence" value="ECO:0007669"/>
    <property type="project" value="UniProtKB-SubCell"/>
</dbReference>
<dbReference type="GO" id="GO:0000408">
    <property type="term" value="C:EKC/KEOPS complex"/>
    <property type="evidence" value="ECO:0007669"/>
    <property type="project" value="InterPro"/>
</dbReference>
<dbReference type="GO" id="GO:0005506">
    <property type="term" value="F:iron ion binding"/>
    <property type="evidence" value="ECO:0007669"/>
    <property type="project" value="UniProtKB-UniRule"/>
</dbReference>
<dbReference type="GO" id="GO:0061711">
    <property type="term" value="F:N(6)-L-threonylcarbamoyladenine synthase activity"/>
    <property type="evidence" value="ECO:0007669"/>
    <property type="project" value="UniProtKB-EC"/>
</dbReference>
<dbReference type="GO" id="GO:0002949">
    <property type="term" value="P:tRNA threonylcarbamoyladenosine modification"/>
    <property type="evidence" value="ECO:0007669"/>
    <property type="project" value="UniProtKB-UniRule"/>
</dbReference>
<dbReference type="Gene3D" id="3.30.420.40">
    <property type="match status" value="2"/>
</dbReference>
<dbReference type="HAMAP" id="MF_01446">
    <property type="entry name" value="Kae1"/>
    <property type="match status" value="1"/>
</dbReference>
<dbReference type="InterPro" id="IPR043129">
    <property type="entry name" value="ATPase_NBD"/>
</dbReference>
<dbReference type="InterPro" id="IPR000905">
    <property type="entry name" value="Gcp-like_dom"/>
</dbReference>
<dbReference type="InterPro" id="IPR017861">
    <property type="entry name" value="KAE1/TsaD"/>
</dbReference>
<dbReference type="InterPro" id="IPR034680">
    <property type="entry name" value="Kae1_archaea_euk"/>
</dbReference>
<dbReference type="InterPro" id="IPR017860">
    <property type="entry name" value="Peptidase_M22_CS"/>
</dbReference>
<dbReference type="NCBIfam" id="TIGR03722">
    <property type="entry name" value="arch_KAE1"/>
    <property type="match status" value="1"/>
</dbReference>
<dbReference type="NCBIfam" id="TIGR00329">
    <property type="entry name" value="gcp_kae1"/>
    <property type="match status" value="1"/>
</dbReference>
<dbReference type="PANTHER" id="PTHR11735">
    <property type="entry name" value="TRNA N6-ADENOSINE THREONYLCARBAMOYLTRANSFERASE"/>
    <property type="match status" value="1"/>
</dbReference>
<dbReference type="PANTHER" id="PTHR11735:SF14">
    <property type="entry name" value="TRNA N6-ADENOSINE THREONYLCARBAMOYLTRANSFERASE"/>
    <property type="match status" value="1"/>
</dbReference>
<dbReference type="Pfam" id="PF00814">
    <property type="entry name" value="TsaD"/>
    <property type="match status" value="1"/>
</dbReference>
<dbReference type="PRINTS" id="PR00789">
    <property type="entry name" value="OSIALOPTASE"/>
</dbReference>
<dbReference type="SUPFAM" id="SSF53067">
    <property type="entry name" value="Actin-like ATPase domain"/>
    <property type="match status" value="1"/>
</dbReference>
<dbReference type="PROSITE" id="PS01016">
    <property type="entry name" value="GLYCOPROTEASE"/>
    <property type="match status" value="1"/>
</dbReference>
<accession>A2BJY9</accession>